<sequence>MARYFRRRKFCRFTAENVVEIDYKDIATLKNYITESGKIVPSRITGTRAKYQRQLARAIKRARYLALLPYTDNHQ</sequence>
<comment type="function">
    <text evidence="1">Binds as a heterodimer with protein bS6 to the central domain of the 16S rRNA, where it helps stabilize the platform of the 30S subunit.</text>
</comment>
<comment type="subunit">
    <text evidence="1">Part of the 30S ribosomal subunit. Forms a tight heterodimer with protein bS6.</text>
</comment>
<comment type="similarity">
    <text evidence="1">Belongs to the bacterial ribosomal protein bS18 family.</text>
</comment>
<evidence type="ECO:0000255" key="1">
    <source>
        <dbReference type="HAMAP-Rule" id="MF_00270"/>
    </source>
</evidence>
<evidence type="ECO:0000305" key="2"/>
<name>RS18_HISS2</name>
<gene>
    <name evidence="1" type="primary">rpsR</name>
    <name type="ordered locus">HSM_0606</name>
</gene>
<organism>
    <name type="scientific">Histophilus somni (strain 2336)</name>
    <name type="common">Haemophilus somnus</name>
    <dbReference type="NCBI Taxonomy" id="228400"/>
    <lineage>
        <taxon>Bacteria</taxon>
        <taxon>Pseudomonadati</taxon>
        <taxon>Pseudomonadota</taxon>
        <taxon>Gammaproteobacteria</taxon>
        <taxon>Pasteurellales</taxon>
        <taxon>Pasteurellaceae</taxon>
        <taxon>Histophilus</taxon>
    </lineage>
</organism>
<keyword id="KW-0687">Ribonucleoprotein</keyword>
<keyword id="KW-0689">Ribosomal protein</keyword>
<keyword id="KW-0694">RNA-binding</keyword>
<keyword id="KW-0699">rRNA-binding</keyword>
<dbReference type="EMBL" id="CP000947">
    <property type="protein sequence ID" value="ACA32259.1"/>
    <property type="molecule type" value="Genomic_DNA"/>
</dbReference>
<dbReference type="RefSeq" id="WP_005759927.1">
    <property type="nucleotide sequence ID" value="NC_010519.1"/>
</dbReference>
<dbReference type="SMR" id="B0US45"/>
<dbReference type="STRING" id="228400.HSM_0606"/>
<dbReference type="GeneID" id="93226450"/>
<dbReference type="KEGG" id="hsm:HSM_0606"/>
<dbReference type="HOGENOM" id="CLU_148710_2_2_6"/>
<dbReference type="GO" id="GO:0022627">
    <property type="term" value="C:cytosolic small ribosomal subunit"/>
    <property type="evidence" value="ECO:0007669"/>
    <property type="project" value="TreeGrafter"/>
</dbReference>
<dbReference type="GO" id="GO:0070181">
    <property type="term" value="F:small ribosomal subunit rRNA binding"/>
    <property type="evidence" value="ECO:0007669"/>
    <property type="project" value="TreeGrafter"/>
</dbReference>
<dbReference type="GO" id="GO:0003735">
    <property type="term" value="F:structural constituent of ribosome"/>
    <property type="evidence" value="ECO:0007669"/>
    <property type="project" value="InterPro"/>
</dbReference>
<dbReference type="GO" id="GO:0006412">
    <property type="term" value="P:translation"/>
    <property type="evidence" value="ECO:0007669"/>
    <property type="project" value="UniProtKB-UniRule"/>
</dbReference>
<dbReference type="FunFam" id="4.10.640.10:FF:000001">
    <property type="entry name" value="30S ribosomal protein S18"/>
    <property type="match status" value="1"/>
</dbReference>
<dbReference type="Gene3D" id="4.10.640.10">
    <property type="entry name" value="Ribosomal protein S18"/>
    <property type="match status" value="1"/>
</dbReference>
<dbReference type="HAMAP" id="MF_00270">
    <property type="entry name" value="Ribosomal_bS18"/>
    <property type="match status" value="1"/>
</dbReference>
<dbReference type="InterPro" id="IPR001648">
    <property type="entry name" value="Ribosomal_bS18"/>
</dbReference>
<dbReference type="InterPro" id="IPR018275">
    <property type="entry name" value="Ribosomal_bS18_CS"/>
</dbReference>
<dbReference type="InterPro" id="IPR036870">
    <property type="entry name" value="Ribosomal_bS18_sf"/>
</dbReference>
<dbReference type="NCBIfam" id="TIGR00165">
    <property type="entry name" value="S18"/>
    <property type="match status" value="1"/>
</dbReference>
<dbReference type="PANTHER" id="PTHR13479">
    <property type="entry name" value="30S RIBOSOMAL PROTEIN S18"/>
    <property type="match status" value="1"/>
</dbReference>
<dbReference type="PANTHER" id="PTHR13479:SF40">
    <property type="entry name" value="SMALL RIBOSOMAL SUBUNIT PROTEIN BS18M"/>
    <property type="match status" value="1"/>
</dbReference>
<dbReference type="Pfam" id="PF01084">
    <property type="entry name" value="Ribosomal_S18"/>
    <property type="match status" value="1"/>
</dbReference>
<dbReference type="PRINTS" id="PR00974">
    <property type="entry name" value="RIBOSOMALS18"/>
</dbReference>
<dbReference type="SUPFAM" id="SSF46911">
    <property type="entry name" value="Ribosomal protein S18"/>
    <property type="match status" value="1"/>
</dbReference>
<dbReference type="PROSITE" id="PS00057">
    <property type="entry name" value="RIBOSOMAL_S18"/>
    <property type="match status" value="1"/>
</dbReference>
<proteinExistence type="inferred from homology"/>
<feature type="chain" id="PRO_1000078703" description="Small ribosomal subunit protein bS18">
    <location>
        <begin position="1"/>
        <end position="75"/>
    </location>
</feature>
<protein>
    <recommendedName>
        <fullName evidence="1">Small ribosomal subunit protein bS18</fullName>
    </recommendedName>
    <alternativeName>
        <fullName evidence="2">30S ribosomal protein S18</fullName>
    </alternativeName>
</protein>
<reference key="1">
    <citation type="submission" date="2008-02" db="EMBL/GenBank/DDBJ databases">
        <title>Complete sequence of Haemophilus somnus 2336.</title>
        <authorList>
            <consortium name="US DOE Joint Genome Institute"/>
            <person name="Siddaramappa S."/>
            <person name="Duncan A.J."/>
            <person name="Challacombe J.F."/>
            <person name="Rainey D."/>
            <person name="Gillaspy A.F."/>
            <person name="Carson M."/>
            <person name="Gipson J."/>
            <person name="Gipson M."/>
            <person name="Bruce D."/>
            <person name="Detter J.C."/>
            <person name="Han C.S."/>
            <person name="Land M."/>
            <person name="Tapia R."/>
            <person name="Thompson L.S."/>
            <person name="Orvis J."/>
            <person name="Zaitshik J."/>
            <person name="Barnes G."/>
            <person name="Brettin T.S."/>
            <person name="Dyer D.W."/>
            <person name="Inzana T.J."/>
        </authorList>
    </citation>
    <scope>NUCLEOTIDE SEQUENCE [LARGE SCALE GENOMIC DNA]</scope>
    <source>
        <strain>2336</strain>
    </source>
</reference>
<accession>B0US45</accession>